<sequence>MPDDFKIPRATLKRLPLYYRFVSILKGKGIDRVNSKTISEALQIDSATIRRDFSYFGELGKKGYGYNIDSMLEFFKSELSESDQIKIAIIGIGNLGRALLTYNFSIHDEMTITEAFDIRPDIIGENIGDVVVKHSDDIKTTLESEDIDVVILTTPDNVAQQVADELVKAGVKGILNFTPRRIKTPQDVQVHHIDFGIELQSLLFFMKNYSK</sequence>
<feature type="chain" id="PRO_0000097910" description="Redox-sensing transcriptional repressor Rex">
    <location>
        <begin position="1"/>
        <end position="211"/>
    </location>
</feature>
<feature type="DNA-binding region" description="H-T-H motif" evidence="1">
    <location>
        <begin position="17"/>
        <end position="56"/>
    </location>
</feature>
<feature type="binding site" evidence="1">
    <location>
        <begin position="91"/>
        <end position="96"/>
    </location>
    <ligand>
        <name>NAD(+)</name>
        <dbReference type="ChEBI" id="CHEBI:57540"/>
    </ligand>
</feature>
<dbReference type="EMBL" id="CP000029">
    <property type="protein sequence ID" value="AAW54985.1"/>
    <property type="molecule type" value="Genomic_DNA"/>
</dbReference>
<dbReference type="RefSeq" id="WP_002457061.1">
    <property type="nucleotide sequence ID" value="NC_002976.3"/>
</dbReference>
<dbReference type="SMR" id="Q5HMH1"/>
<dbReference type="STRING" id="176279.SERP1657"/>
<dbReference type="KEGG" id="ser:SERP1657"/>
<dbReference type="eggNOG" id="COG2344">
    <property type="taxonomic scope" value="Bacteria"/>
</dbReference>
<dbReference type="HOGENOM" id="CLU_061534_1_1_9"/>
<dbReference type="Proteomes" id="UP000000531">
    <property type="component" value="Chromosome"/>
</dbReference>
<dbReference type="GO" id="GO:0005737">
    <property type="term" value="C:cytoplasm"/>
    <property type="evidence" value="ECO:0007669"/>
    <property type="project" value="UniProtKB-SubCell"/>
</dbReference>
<dbReference type="GO" id="GO:0003677">
    <property type="term" value="F:DNA binding"/>
    <property type="evidence" value="ECO:0007669"/>
    <property type="project" value="UniProtKB-UniRule"/>
</dbReference>
<dbReference type="GO" id="GO:0003700">
    <property type="term" value="F:DNA-binding transcription factor activity"/>
    <property type="evidence" value="ECO:0007669"/>
    <property type="project" value="UniProtKB-UniRule"/>
</dbReference>
<dbReference type="GO" id="GO:0045892">
    <property type="term" value="P:negative regulation of DNA-templated transcription"/>
    <property type="evidence" value="ECO:0007669"/>
    <property type="project" value="InterPro"/>
</dbReference>
<dbReference type="GO" id="GO:0051775">
    <property type="term" value="P:response to redox state"/>
    <property type="evidence" value="ECO:0007669"/>
    <property type="project" value="InterPro"/>
</dbReference>
<dbReference type="Gene3D" id="3.40.50.720">
    <property type="entry name" value="NAD(P)-binding Rossmann-like Domain"/>
    <property type="match status" value="1"/>
</dbReference>
<dbReference type="Gene3D" id="1.10.10.10">
    <property type="entry name" value="Winged helix-like DNA-binding domain superfamily/Winged helix DNA-binding domain"/>
    <property type="match status" value="1"/>
</dbReference>
<dbReference type="HAMAP" id="MF_01131">
    <property type="entry name" value="Rex"/>
    <property type="match status" value="1"/>
</dbReference>
<dbReference type="InterPro" id="IPR003781">
    <property type="entry name" value="CoA-bd"/>
</dbReference>
<dbReference type="InterPro" id="IPR036291">
    <property type="entry name" value="NAD(P)-bd_dom_sf"/>
</dbReference>
<dbReference type="InterPro" id="IPR009718">
    <property type="entry name" value="Rex_DNA-bd_C_dom"/>
</dbReference>
<dbReference type="InterPro" id="IPR022876">
    <property type="entry name" value="Tscrpt_rep_Rex"/>
</dbReference>
<dbReference type="InterPro" id="IPR036388">
    <property type="entry name" value="WH-like_DNA-bd_sf"/>
</dbReference>
<dbReference type="InterPro" id="IPR036390">
    <property type="entry name" value="WH_DNA-bd_sf"/>
</dbReference>
<dbReference type="NCBIfam" id="NF003989">
    <property type="entry name" value="PRK05472.1-3"/>
    <property type="match status" value="1"/>
</dbReference>
<dbReference type="NCBIfam" id="NF003991">
    <property type="entry name" value="PRK05472.1-5"/>
    <property type="match status" value="1"/>
</dbReference>
<dbReference type="NCBIfam" id="NF003994">
    <property type="entry name" value="PRK05472.2-3"/>
    <property type="match status" value="1"/>
</dbReference>
<dbReference type="NCBIfam" id="NF003995">
    <property type="entry name" value="PRK05472.2-4"/>
    <property type="match status" value="1"/>
</dbReference>
<dbReference type="NCBIfam" id="NF003996">
    <property type="entry name" value="PRK05472.2-5"/>
    <property type="match status" value="1"/>
</dbReference>
<dbReference type="PANTHER" id="PTHR35786">
    <property type="entry name" value="REDOX-SENSING TRANSCRIPTIONAL REPRESSOR REX"/>
    <property type="match status" value="1"/>
</dbReference>
<dbReference type="PANTHER" id="PTHR35786:SF1">
    <property type="entry name" value="REDOX-SENSING TRANSCRIPTIONAL REPRESSOR REX 1"/>
    <property type="match status" value="1"/>
</dbReference>
<dbReference type="Pfam" id="PF02629">
    <property type="entry name" value="CoA_binding"/>
    <property type="match status" value="1"/>
</dbReference>
<dbReference type="Pfam" id="PF06971">
    <property type="entry name" value="Put_DNA-bind_N"/>
    <property type="match status" value="1"/>
</dbReference>
<dbReference type="SMART" id="SM00881">
    <property type="entry name" value="CoA_binding"/>
    <property type="match status" value="1"/>
</dbReference>
<dbReference type="SUPFAM" id="SSF51735">
    <property type="entry name" value="NAD(P)-binding Rossmann-fold domains"/>
    <property type="match status" value="1"/>
</dbReference>
<dbReference type="SUPFAM" id="SSF46785">
    <property type="entry name" value="Winged helix' DNA-binding domain"/>
    <property type="match status" value="1"/>
</dbReference>
<keyword id="KW-0963">Cytoplasm</keyword>
<keyword id="KW-0238">DNA-binding</keyword>
<keyword id="KW-0520">NAD</keyword>
<keyword id="KW-1185">Reference proteome</keyword>
<keyword id="KW-0678">Repressor</keyword>
<keyword id="KW-0804">Transcription</keyword>
<keyword id="KW-0805">Transcription regulation</keyword>
<evidence type="ECO:0000255" key="1">
    <source>
        <dbReference type="HAMAP-Rule" id="MF_01131"/>
    </source>
</evidence>
<proteinExistence type="inferred from homology"/>
<name>REX_STAEQ</name>
<comment type="function">
    <text evidence="1">Modulates transcription in response to changes in cellular NADH/NAD(+) redox state.</text>
</comment>
<comment type="subunit">
    <text evidence="1">Homodimer.</text>
</comment>
<comment type="subcellular location">
    <subcellularLocation>
        <location evidence="1">Cytoplasm</location>
    </subcellularLocation>
</comment>
<comment type="similarity">
    <text evidence="1">Belongs to the transcriptional regulatory Rex family.</text>
</comment>
<protein>
    <recommendedName>
        <fullName evidence="1">Redox-sensing transcriptional repressor Rex</fullName>
    </recommendedName>
</protein>
<gene>
    <name evidence="1" type="primary">rex</name>
    <name type="ordered locus">SERP1657</name>
</gene>
<accession>Q5HMH1</accession>
<organism>
    <name type="scientific">Staphylococcus epidermidis (strain ATCC 35984 / DSM 28319 / BCRC 17069 / CCUG 31568 / BM 3577 / RP62A)</name>
    <dbReference type="NCBI Taxonomy" id="176279"/>
    <lineage>
        <taxon>Bacteria</taxon>
        <taxon>Bacillati</taxon>
        <taxon>Bacillota</taxon>
        <taxon>Bacilli</taxon>
        <taxon>Bacillales</taxon>
        <taxon>Staphylococcaceae</taxon>
        <taxon>Staphylococcus</taxon>
    </lineage>
</organism>
<reference key="1">
    <citation type="journal article" date="2005" name="J. Bacteriol.">
        <title>Insights on evolution of virulence and resistance from the complete genome analysis of an early methicillin-resistant Staphylococcus aureus strain and a biofilm-producing methicillin-resistant Staphylococcus epidermidis strain.</title>
        <authorList>
            <person name="Gill S.R."/>
            <person name="Fouts D.E."/>
            <person name="Archer G.L."/>
            <person name="Mongodin E.F."/>
            <person name="DeBoy R.T."/>
            <person name="Ravel J."/>
            <person name="Paulsen I.T."/>
            <person name="Kolonay J.F."/>
            <person name="Brinkac L.M."/>
            <person name="Beanan M.J."/>
            <person name="Dodson R.J."/>
            <person name="Daugherty S.C."/>
            <person name="Madupu R."/>
            <person name="Angiuoli S.V."/>
            <person name="Durkin A.S."/>
            <person name="Haft D.H."/>
            <person name="Vamathevan J.J."/>
            <person name="Khouri H."/>
            <person name="Utterback T.R."/>
            <person name="Lee C."/>
            <person name="Dimitrov G."/>
            <person name="Jiang L."/>
            <person name="Qin H."/>
            <person name="Weidman J."/>
            <person name="Tran K."/>
            <person name="Kang K.H."/>
            <person name="Hance I.R."/>
            <person name="Nelson K.E."/>
            <person name="Fraser C.M."/>
        </authorList>
    </citation>
    <scope>NUCLEOTIDE SEQUENCE [LARGE SCALE GENOMIC DNA]</scope>
    <source>
        <strain>ATCC 35984 / DSM 28319 / BCRC 17069 / CCUG 31568 / BM 3577 / RP62A</strain>
    </source>
</reference>